<dbReference type="EMBL" id="AE017262">
    <property type="protein sequence ID" value="AAT04329.1"/>
    <property type="molecule type" value="Genomic_DNA"/>
</dbReference>
<dbReference type="RefSeq" id="WP_003726646.1">
    <property type="nucleotide sequence ID" value="NC_002973.6"/>
</dbReference>
<dbReference type="SMR" id="Q71ZD5"/>
<dbReference type="KEGG" id="lmf:LMOf2365_1554"/>
<dbReference type="HOGENOM" id="CLU_062974_2_2_9"/>
<dbReference type="GO" id="GO:0005829">
    <property type="term" value="C:cytosol"/>
    <property type="evidence" value="ECO:0007669"/>
    <property type="project" value="TreeGrafter"/>
</dbReference>
<dbReference type="GO" id="GO:0003677">
    <property type="term" value="F:DNA binding"/>
    <property type="evidence" value="ECO:0007669"/>
    <property type="project" value="UniProtKB-UniRule"/>
</dbReference>
<dbReference type="GO" id="GO:0006355">
    <property type="term" value="P:regulation of DNA-templated transcription"/>
    <property type="evidence" value="ECO:0007669"/>
    <property type="project" value="UniProtKB-UniRule"/>
</dbReference>
<dbReference type="FunFam" id="1.10.10.200:FF:000002">
    <property type="entry name" value="Probable transcriptional regulatory protein CLM62_37755"/>
    <property type="match status" value="1"/>
</dbReference>
<dbReference type="FunFam" id="3.30.70.980:FF:000002">
    <property type="entry name" value="Probable transcriptional regulatory protein YebC"/>
    <property type="match status" value="1"/>
</dbReference>
<dbReference type="Gene3D" id="1.10.10.200">
    <property type="match status" value="1"/>
</dbReference>
<dbReference type="Gene3D" id="3.30.70.980">
    <property type="match status" value="2"/>
</dbReference>
<dbReference type="HAMAP" id="MF_00693">
    <property type="entry name" value="Transcrip_reg_TACO1"/>
    <property type="match status" value="1"/>
</dbReference>
<dbReference type="InterPro" id="IPR017856">
    <property type="entry name" value="Integrase-like_N"/>
</dbReference>
<dbReference type="InterPro" id="IPR048300">
    <property type="entry name" value="TACO1_YebC-like_2nd/3rd_dom"/>
</dbReference>
<dbReference type="InterPro" id="IPR049083">
    <property type="entry name" value="TACO1_YebC_N"/>
</dbReference>
<dbReference type="InterPro" id="IPR002876">
    <property type="entry name" value="Transcrip_reg_TACO1-like"/>
</dbReference>
<dbReference type="InterPro" id="IPR026564">
    <property type="entry name" value="Transcrip_reg_TACO1-like_dom3"/>
</dbReference>
<dbReference type="InterPro" id="IPR029072">
    <property type="entry name" value="YebC-like"/>
</dbReference>
<dbReference type="NCBIfam" id="NF001030">
    <property type="entry name" value="PRK00110.1"/>
    <property type="match status" value="1"/>
</dbReference>
<dbReference type="NCBIfam" id="NF009044">
    <property type="entry name" value="PRK12378.1"/>
    <property type="match status" value="1"/>
</dbReference>
<dbReference type="NCBIfam" id="TIGR01033">
    <property type="entry name" value="YebC/PmpR family DNA-binding transcriptional regulator"/>
    <property type="match status" value="1"/>
</dbReference>
<dbReference type="PANTHER" id="PTHR12532:SF6">
    <property type="entry name" value="TRANSCRIPTIONAL REGULATORY PROTEIN YEBC-RELATED"/>
    <property type="match status" value="1"/>
</dbReference>
<dbReference type="PANTHER" id="PTHR12532">
    <property type="entry name" value="TRANSLATIONAL ACTIVATOR OF CYTOCHROME C OXIDASE 1"/>
    <property type="match status" value="1"/>
</dbReference>
<dbReference type="Pfam" id="PF20772">
    <property type="entry name" value="TACO1_YebC_N"/>
    <property type="match status" value="1"/>
</dbReference>
<dbReference type="Pfam" id="PF01709">
    <property type="entry name" value="Transcrip_reg"/>
    <property type="match status" value="1"/>
</dbReference>
<dbReference type="SUPFAM" id="SSF75625">
    <property type="entry name" value="YebC-like"/>
    <property type="match status" value="1"/>
</dbReference>
<name>Y1554_LISMF</name>
<accession>Q71ZD5</accession>
<keyword id="KW-0963">Cytoplasm</keyword>
<keyword id="KW-0238">DNA-binding</keyword>
<keyword id="KW-0804">Transcription</keyword>
<keyword id="KW-0805">Transcription regulation</keyword>
<protein>
    <recommendedName>
        <fullName evidence="1">Probable transcriptional regulatory protein LMOf2365_1554</fullName>
    </recommendedName>
</protein>
<proteinExistence type="inferred from homology"/>
<reference key="1">
    <citation type="journal article" date="2004" name="Nucleic Acids Res.">
        <title>Whole genome comparisons of serotype 4b and 1/2a strains of the food-borne pathogen Listeria monocytogenes reveal new insights into the core genome components of this species.</title>
        <authorList>
            <person name="Nelson K.E."/>
            <person name="Fouts D.E."/>
            <person name="Mongodin E.F."/>
            <person name="Ravel J."/>
            <person name="DeBoy R.T."/>
            <person name="Kolonay J.F."/>
            <person name="Rasko D.A."/>
            <person name="Angiuoli S.V."/>
            <person name="Gill S.R."/>
            <person name="Paulsen I.T."/>
            <person name="Peterson J.D."/>
            <person name="White O."/>
            <person name="Nelson W.C."/>
            <person name="Nierman W.C."/>
            <person name="Beanan M.J."/>
            <person name="Brinkac L.M."/>
            <person name="Daugherty S.C."/>
            <person name="Dodson R.J."/>
            <person name="Durkin A.S."/>
            <person name="Madupu R."/>
            <person name="Haft D.H."/>
            <person name="Selengut J."/>
            <person name="Van Aken S.E."/>
            <person name="Khouri H.M."/>
            <person name="Fedorova N."/>
            <person name="Forberger H.A."/>
            <person name="Tran B."/>
            <person name="Kathariou S."/>
            <person name="Wonderling L.D."/>
            <person name="Uhlich G.A."/>
            <person name="Bayles D.O."/>
            <person name="Luchansky J.B."/>
            <person name="Fraser C.M."/>
        </authorList>
    </citation>
    <scope>NUCLEOTIDE SEQUENCE [LARGE SCALE GENOMIC DNA]</scope>
    <source>
        <strain>F2365</strain>
    </source>
</reference>
<evidence type="ECO:0000255" key="1">
    <source>
        <dbReference type="HAMAP-Rule" id="MF_00693"/>
    </source>
</evidence>
<evidence type="ECO:0000256" key="2">
    <source>
        <dbReference type="SAM" id="MobiDB-lite"/>
    </source>
</evidence>
<gene>
    <name type="ordered locus">LMOf2365_1554</name>
</gene>
<feature type="chain" id="PRO_0000175837" description="Probable transcriptional regulatory protein LMOf2365_1554">
    <location>
        <begin position="1"/>
        <end position="241"/>
    </location>
</feature>
<feature type="region of interest" description="Disordered" evidence="2">
    <location>
        <begin position="1"/>
        <end position="22"/>
    </location>
</feature>
<feature type="compositionally biased region" description="Polar residues" evidence="2">
    <location>
        <begin position="1"/>
        <end position="14"/>
    </location>
</feature>
<sequence>MSGHSKWNNIQGRKNAQDSKRSKVFQKLAREIFVAAKKGPDPNLNPSLRLVMDKAKAVNMPNDNIKRAIDKAAGNTSGENYDEVTYEGYAPGGIAVLVHALTDNKNRTSTNVRVAFNKNGGSLGETGSVSYMFDRKGYLVILREGLDVDEEEFMLEAIEAGADDVEVSEDVFEIFTDPATFPEVKEALQEAGYTFATAELSMFPTVYNEVAENNQTQFDKMLEALEDDDDVQEVYTNAEIN</sequence>
<organism>
    <name type="scientific">Listeria monocytogenes serotype 4b (strain F2365)</name>
    <dbReference type="NCBI Taxonomy" id="265669"/>
    <lineage>
        <taxon>Bacteria</taxon>
        <taxon>Bacillati</taxon>
        <taxon>Bacillota</taxon>
        <taxon>Bacilli</taxon>
        <taxon>Bacillales</taxon>
        <taxon>Listeriaceae</taxon>
        <taxon>Listeria</taxon>
    </lineage>
</organism>
<comment type="subcellular location">
    <subcellularLocation>
        <location evidence="1">Cytoplasm</location>
    </subcellularLocation>
</comment>
<comment type="similarity">
    <text evidence="1">Belongs to the TACO1 family.</text>
</comment>